<keyword id="KW-0997">Cell inner membrane</keyword>
<keyword id="KW-1003">Cell membrane</keyword>
<keyword id="KW-0406">Ion transport</keyword>
<keyword id="KW-0464">Manganese</keyword>
<keyword id="KW-0472">Membrane</keyword>
<keyword id="KW-1185">Reference proteome</keyword>
<keyword id="KW-0812">Transmembrane</keyword>
<keyword id="KW-1133">Transmembrane helix</keyword>
<keyword id="KW-0813">Transport</keyword>
<accession>Q8ZFF8</accession>
<accession>Q0WG35</accession>
<accession>Q74UR3</accession>
<accession>Q7CHV0</accession>
<comment type="function">
    <text evidence="1">Probably functions as a manganese efflux pump.</text>
</comment>
<comment type="subcellular location">
    <subcellularLocation>
        <location evidence="1">Cell inner membrane</location>
        <topology evidence="1">Multi-pass membrane protein</topology>
    </subcellularLocation>
</comment>
<comment type="similarity">
    <text evidence="1">Belongs to the MntP (TC 9.B.29) family.</text>
</comment>
<proteinExistence type="inferred from homology"/>
<name>MNTP_YERPE</name>
<feature type="chain" id="PRO_0000155675" description="Putative manganese efflux pump MntP">
    <location>
        <begin position="1"/>
        <end position="189"/>
    </location>
</feature>
<feature type="transmembrane region" description="Helical" evidence="1">
    <location>
        <begin position="3"/>
        <end position="23"/>
    </location>
</feature>
<feature type="transmembrane region" description="Helical" evidence="1">
    <location>
        <begin position="41"/>
        <end position="61"/>
    </location>
</feature>
<feature type="transmembrane region" description="Helical" evidence="1">
    <location>
        <begin position="65"/>
        <end position="85"/>
    </location>
</feature>
<feature type="transmembrane region" description="Helical" evidence="1">
    <location>
        <begin position="104"/>
        <end position="124"/>
    </location>
</feature>
<feature type="transmembrane region" description="Helical" evidence="1">
    <location>
        <begin position="132"/>
        <end position="152"/>
    </location>
</feature>
<feature type="transmembrane region" description="Helical" evidence="1">
    <location>
        <begin position="167"/>
        <end position="187"/>
    </location>
</feature>
<evidence type="ECO:0000255" key="1">
    <source>
        <dbReference type="HAMAP-Rule" id="MF_01521"/>
    </source>
</evidence>
<gene>
    <name evidence="1" type="primary">mntP</name>
    <name type="ordered locus">YPO1754</name>
    <name type="ordered locus">y2555</name>
    <name type="ordered locus">YP_1638</name>
</gene>
<organism>
    <name type="scientific">Yersinia pestis</name>
    <dbReference type="NCBI Taxonomy" id="632"/>
    <lineage>
        <taxon>Bacteria</taxon>
        <taxon>Pseudomonadati</taxon>
        <taxon>Pseudomonadota</taxon>
        <taxon>Gammaproteobacteria</taxon>
        <taxon>Enterobacterales</taxon>
        <taxon>Yersiniaceae</taxon>
        <taxon>Yersinia</taxon>
    </lineage>
</organism>
<dbReference type="EMBL" id="AL590842">
    <property type="protein sequence ID" value="CAL20396.1"/>
    <property type="molecule type" value="Genomic_DNA"/>
</dbReference>
<dbReference type="EMBL" id="AE009952">
    <property type="protein sequence ID" value="AAM86110.1"/>
    <property type="molecule type" value="Genomic_DNA"/>
</dbReference>
<dbReference type="EMBL" id="AE017042">
    <property type="protein sequence ID" value="AAS61870.1"/>
    <property type="molecule type" value="Genomic_DNA"/>
</dbReference>
<dbReference type="PIR" id="AI0213">
    <property type="entry name" value="AI0213"/>
</dbReference>
<dbReference type="RefSeq" id="WP_002211065.1">
    <property type="nucleotide sequence ID" value="NZ_WUCM01000019.1"/>
</dbReference>
<dbReference type="RefSeq" id="YP_002346753.1">
    <property type="nucleotide sequence ID" value="NC_003143.1"/>
</dbReference>
<dbReference type="STRING" id="214092.YPO1754"/>
<dbReference type="PaxDb" id="214092-YPO1754"/>
<dbReference type="DNASU" id="1147502"/>
<dbReference type="EnsemblBacteria" id="AAS61870">
    <property type="protein sequence ID" value="AAS61870"/>
    <property type="gene ID" value="YP_1638"/>
</dbReference>
<dbReference type="GeneID" id="57976826"/>
<dbReference type="KEGG" id="ype:YPO1754"/>
<dbReference type="KEGG" id="ypk:y2555"/>
<dbReference type="KEGG" id="ypm:YP_1638"/>
<dbReference type="PATRIC" id="fig|214092.21.peg.2111"/>
<dbReference type="eggNOG" id="COG1971">
    <property type="taxonomic scope" value="Bacteria"/>
</dbReference>
<dbReference type="HOGENOM" id="CLU_096410_0_0_6"/>
<dbReference type="OMA" id="WHFGLFQ"/>
<dbReference type="OrthoDB" id="9811590at2"/>
<dbReference type="Proteomes" id="UP000000815">
    <property type="component" value="Chromosome"/>
</dbReference>
<dbReference type="Proteomes" id="UP000001019">
    <property type="component" value="Chromosome"/>
</dbReference>
<dbReference type="Proteomes" id="UP000002490">
    <property type="component" value="Chromosome"/>
</dbReference>
<dbReference type="GO" id="GO:0005886">
    <property type="term" value="C:plasma membrane"/>
    <property type="evidence" value="ECO:0000318"/>
    <property type="project" value="GO_Central"/>
</dbReference>
<dbReference type="GO" id="GO:0005384">
    <property type="term" value="F:manganese ion transmembrane transporter activity"/>
    <property type="evidence" value="ECO:0000318"/>
    <property type="project" value="GO_Central"/>
</dbReference>
<dbReference type="GO" id="GO:0030026">
    <property type="term" value="P:intracellular manganese ion homeostasis"/>
    <property type="evidence" value="ECO:0000318"/>
    <property type="project" value="GO_Central"/>
</dbReference>
<dbReference type="GO" id="GO:0140048">
    <property type="term" value="P:manganese ion export across plasma membrane"/>
    <property type="evidence" value="ECO:0000318"/>
    <property type="project" value="GO_Central"/>
</dbReference>
<dbReference type="HAMAP" id="MF_01521">
    <property type="entry name" value="MntP_pump"/>
    <property type="match status" value="1"/>
</dbReference>
<dbReference type="InterPro" id="IPR003810">
    <property type="entry name" value="Mntp/YtaF"/>
</dbReference>
<dbReference type="InterPro" id="IPR022929">
    <property type="entry name" value="Put_MntP"/>
</dbReference>
<dbReference type="NCBIfam" id="NF008546">
    <property type="entry name" value="PRK11469.1"/>
    <property type="match status" value="1"/>
</dbReference>
<dbReference type="PANTHER" id="PTHR35529">
    <property type="entry name" value="MANGANESE EFFLUX PUMP MNTP-RELATED"/>
    <property type="match status" value="1"/>
</dbReference>
<dbReference type="PANTHER" id="PTHR35529:SF1">
    <property type="entry name" value="MANGANESE EFFLUX PUMP MNTP-RELATED"/>
    <property type="match status" value="1"/>
</dbReference>
<dbReference type="Pfam" id="PF02659">
    <property type="entry name" value="Mntp"/>
    <property type="match status" value="1"/>
</dbReference>
<protein>
    <recommendedName>
        <fullName evidence="1">Putative manganese efflux pump MntP</fullName>
    </recommendedName>
</protein>
<sequence length="189" mass="20660">MNLSATIILAFAMSMDAFAASIGKGATLYKPRFREALRTGLIFGVIEAITPLIGWCIGLFASQYIMEWDHWIAFSLLFILGCRMIFEGMKQRVAETEKMRSHSFWVLVTTAIATSLDAMAIGVGLAFLQVDIVHTAMAIGLATMIMATLGMLIGRYIGPLLGKRAEIIGGIVLIGIGFNILYEHMHLTA</sequence>
<reference key="1">
    <citation type="journal article" date="2001" name="Nature">
        <title>Genome sequence of Yersinia pestis, the causative agent of plague.</title>
        <authorList>
            <person name="Parkhill J."/>
            <person name="Wren B.W."/>
            <person name="Thomson N.R."/>
            <person name="Titball R.W."/>
            <person name="Holden M.T.G."/>
            <person name="Prentice M.B."/>
            <person name="Sebaihia M."/>
            <person name="James K.D."/>
            <person name="Churcher C.M."/>
            <person name="Mungall K.L."/>
            <person name="Baker S."/>
            <person name="Basham D."/>
            <person name="Bentley S.D."/>
            <person name="Brooks K."/>
            <person name="Cerdeno-Tarraga A.-M."/>
            <person name="Chillingworth T."/>
            <person name="Cronin A."/>
            <person name="Davies R.M."/>
            <person name="Davis P."/>
            <person name="Dougan G."/>
            <person name="Feltwell T."/>
            <person name="Hamlin N."/>
            <person name="Holroyd S."/>
            <person name="Jagels K."/>
            <person name="Karlyshev A.V."/>
            <person name="Leather S."/>
            <person name="Moule S."/>
            <person name="Oyston P.C.F."/>
            <person name="Quail M.A."/>
            <person name="Rutherford K.M."/>
            <person name="Simmonds M."/>
            <person name="Skelton J."/>
            <person name="Stevens K."/>
            <person name="Whitehead S."/>
            <person name="Barrell B.G."/>
        </authorList>
    </citation>
    <scope>NUCLEOTIDE SEQUENCE [LARGE SCALE GENOMIC DNA]</scope>
    <source>
        <strain>CO-92 / Biovar Orientalis</strain>
    </source>
</reference>
<reference key="2">
    <citation type="journal article" date="2002" name="J. Bacteriol.">
        <title>Genome sequence of Yersinia pestis KIM.</title>
        <authorList>
            <person name="Deng W."/>
            <person name="Burland V."/>
            <person name="Plunkett G. III"/>
            <person name="Boutin A."/>
            <person name="Mayhew G.F."/>
            <person name="Liss P."/>
            <person name="Perna N.T."/>
            <person name="Rose D.J."/>
            <person name="Mau B."/>
            <person name="Zhou S."/>
            <person name="Schwartz D.C."/>
            <person name="Fetherston J.D."/>
            <person name="Lindler L.E."/>
            <person name="Brubaker R.R."/>
            <person name="Plano G.V."/>
            <person name="Straley S.C."/>
            <person name="McDonough K.A."/>
            <person name="Nilles M.L."/>
            <person name="Matson J.S."/>
            <person name="Blattner F.R."/>
            <person name="Perry R.D."/>
        </authorList>
    </citation>
    <scope>NUCLEOTIDE SEQUENCE [LARGE SCALE GENOMIC DNA]</scope>
    <source>
        <strain>KIM10+ / Biovar Mediaevalis</strain>
    </source>
</reference>
<reference key="3">
    <citation type="journal article" date="2004" name="DNA Res.">
        <title>Complete genome sequence of Yersinia pestis strain 91001, an isolate avirulent to humans.</title>
        <authorList>
            <person name="Song Y."/>
            <person name="Tong Z."/>
            <person name="Wang J."/>
            <person name="Wang L."/>
            <person name="Guo Z."/>
            <person name="Han Y."/>
            <person name="Zhang J."/>
            <person name="Pei D."/>
            <person name="Zhou D."/>
            <person name="Qin H."/>
            <person name="Pang X."/>
            <person name="Han Y."/>
            <person name="Zhai J."/>
            <person name="Li M."/>
            <person name="Cui B."/>
            <person name="Qi Z."/>
            <person name="Jin L."/>
            <person name="Dai R."/>
            <person name="Chen F."/>
            <person name="Li S."/>
            <person name="Ye C."/>
            <person name="Du Z."/>
            <person name="Lin W."/>
            <person name="Wang J."/>
            <person name="Yu J."/>
            <person name="Yang H."/>
            <person name="Wang J."/>
            <person name="Huang P."/>
            <person name="Yang R."/>
        </authorList>
    </citation>
    <scope>NUCLEOTIDE SEQUENCE [LARGE SCALE GENOMIC DNA]</scope>
    <source>
        <strain>91001 / Biovar Mediaevalis</strain>
    </source>
</reference>